<evidence type="ECO:0000255" key="1"/>
<evidence type="ECO:0000305" key="2"/>
<feature type="chain" id="PRO_0000213268" description="Protein SprT">
    <location>
        <begin position="1"/>
        <end position="165"/>
    </location>
</feature>
<feature type="domain" description="SprT-like">
    <location>
        <begin position="20"/>
        <end position="163"/>
    </location>
</feature>
<feature type="active site" evidence="1">
    <location>
        <position position="79"/>
    </location>
</feature>
<feature type="binding site" evidence="1">
    <location>
        <position position="78"/>
    </location>
    <ligand>
        <name>Zn(2+)</name>
        <dbReference type="ChEBI" id="CHEBI:29105"/>
    </ligand>
</feature>
<feature type="binding site" evidence="1">
    <location>
        <position position="82"/>
    </location>
    <ligand>
        <name>Zn(2+)</name>
        <dbReference type="ChEBI" id="CHEBI:29105"/>
    </ligand>
</feature>
<sequence length="165" mass="19321">MKTSRLPIAIQQAVMRRLREKLAQANLKLGRNYPEPKLSYTQRGTSAGTAWLESYEIRLNPVLLLENSEAFIEEVVPHELAHLLVWKHFGRVAPHGKEWKWMMESVLGVPARRTHQFELQSVRRNTFPYRCKCQEHQLTVRRHNRVVRGEAVYRCVHCGEQLVAK</sequence>
<keyword id="KW-0963">Cytoplasm</keyword>
<keyword id="KW-0479">Metal-binding</keyword>
<keyword id="KW-1185">Reference proteome</keyword>
<keyword id="KW-0862">Zinc</keyword>
<dbReference type="EMBL" id="AE014075">
    <property type="protein sequence ID" value="AAN81978.1"/>
    <property type="status" value="ALT_INIT"/>
    <property type="molecule type" value="Genomic_DNA"/>
</dbReference>
<dbReference type="RefSeq" id="WP_000858396.1">
    <property type="nucleotide sequence ID" value="NZ_CP051263.1"/>
</dbReference>
<dbReference type="SMR" id="Q8FE31"/>
<dbReference type="STRING" id="199310.c3530"/>
<dbReference type="DNASU" id="1039443"/>
<dbReference type="KEGG" id="ecc:c3530"/>
<dbReference type="eggNOG" id="COG3091">
    <property type="taxonomic scope" value="Bacteria"/>
</dbReference>
<dbReference type="HOGENOM" id="CLU_113336_0_1_6"/>
<dbReference type="Proteomes" id="UP000001410">
    <property type="component" value="Chromosome"/>
</dbReference>
<dbReference type="GO" id="GO:0005737">
    <property type="term" value="C:cytoplasm"/>
    <property type="evidence" value="ECO:0007669"/>
    <property type="project" value="UniProtKB-SubCell"/>
</dbReference>
<dbReference type="GO" id="GO:0008270">
    <property type="term" value="F:zinc ion binding"/>
    <property type="evidence" value="ECO:0007669"/>
    <property type="project" value="UniProtKB-UniRule"/>
</dbReference>
<dbReference type="GO" id="GO:0006950">
    <property type="term" value="P:response to stress"/>
    <property type="evidence" value="ECO:0007669"/>
    <property type="project" value="UniProtKB-ARBA"/>
</dbReference>
<dbReference type="Gene3D" id="3.30.2010.10">
    <property type="entry name" value="Metalloproteases ('zincins'), catalytic domain"/>
    <property type="match status" value="1"/>
</dbReference>
<dbReference type="HAMAP" id="MF_00746">
    <property type="entry name" value="SprT"/>
    <property type="match status" value="1"/>
</dbReference>
<dbReference type="InterPro" id="IPR006640">
    <property type="entry name" value="SprT-like_domain"/>
</dbReference>
<dbReference type="InterPro" id="IPR035240">
    <property type="entry name" value="SprT_Zn_ribbon"/>
</dbReference>
<dbReference type="InterPro" id="IPR023483">
    <property type="entry name" value="Uncharacterised_SprT"/>
</dbReference>
<dbReference type="NCBIfam" id="NF003421">
    <property type="entry name" value="PRK04860.1"/>
    <property type="match status" value="1"/>
</dbReference>
<dbReference type="PANTHER" id="PTHR38773">
    <property type="entry name" value="PROTEIN SPRT"/>
    <property type="match status" value="1"/>
</dbReference>
<dbReference type="PANTHER" id="PTHR38773:SF1">
    <property type="entry name" value="PROTEIN SPRT"/>
    <property type="match status" value="1"/>
</dbReference>
<dbReference type="Pfam" id="PF10263">
    <property type="entry name" value="SprT-like"/>
    <property type="match status" value="1"/>
</dbReference>
<dbReference type="Pfam" id="PF17283">
    <property type="entry name" value="Zn_ribbon_SprT"/>
    <property type="match status" value="1"/>
</dbReference>
<dbReference type="SMART" id="SM00731">
    <property type="entry name" value="SprT"/>
    <property type="match status" value="1"/>
</dbReference>
<dbReference type="PROSITE" id="PS00142">
    <property type="entry name" value="ZINC_PROTEASE"/>
    <property type="match status" value="1"/>
</dbReference>
<comment type="cofactor">
    <cofactor evidence="2">
        <name>Zn(2+)</name>
        <dbReference type="ChEBI" id="CHEBI:29105"/>
    </cofactor>
    <text evidence="2">Binds 1 zinc ion.</text>
</comment>
<comment type="subcellular location">
    <subcellularLocation>
        <location evidence="2">Cytoplasm</location>
    </subcellularLocation>
</comment>
<comment type="similarity">
    <text evidence="2">Belongs to the SprT family.</text>
</comment>
<comment type="sequence caution" evidence="2">
    <conflict type="erroneous initiation">
        <sequence resource="EMBL-CDS" id="AAN81978"/>
    </conflict>
</comment>
<name>SPRT_ECOL6</name>
<protein>
    <recommendedName>
        <fullName>Protein SprT</fullName>
    </recommendedName>
</protein>
<gene>
    <name type="primary">sprT</name>
    <name type="ordered locus">c3530</name>
</gene>
<organism>
    <name type="scientific">Escherichia coli O6:H1 (strain CFT073 / ATCC 700928 / UPEC)</name>
    <dbReference type="NCBI Taxonomy" id="199310"/>
    <lineage>
        <taxon>Bacteria</taxon>
        <taxon>Pseudomonadati</taxon>
        <taxon>Pseudomonadota</taxon>
        <taxon>Gammaproteobacteria</taxon>
        <taxon>Enterobacterales</taxon>
        <taxon>Enterobacteriaceae</taxon>
        <taxon>Escherichia</taxon>
    </lineage>
</organism>
<reference key="1">
    <citation type="journal article" date="2002" name="Proc. Natl. Acad. Sci. U.S.A.">
        <title>Extensive mosaic structure revealed by the complete genome sequence of uropathogenic Escherichia coli.</title>
        <authorList>
            <person name="Welch R.A."/>
            <person name="Burland V."/>
            <person name="Plunkett G. III"/>
            <person name="Redford P."/>
            <person name="Roesch P."/>
            <person name="Rasko D."/>
            <person name="Buckles E.L."/>
            <person name="Liou S.-R."/>
            <person name="Boutin A."/>
            <person name="Hackett J."/>
            <person name="Stroud D."/>
            <person name="Mayhew G.F."/>
            <person name="Rose D.J."/>
            <person name="Zhou S."/>
            <person name="Schwartz D.C."/>
            <person name="Perna N.T."/>
            <person name="Mobley H.L.T."/>
            <person name="Donnenberg M.S."/>
            <person name="Blattner F.R."/>
        </authorList>
    </citation>
    <scope>NUCLEOTIDE SEQUENCE [LARGE SCALE GENOMIC DNA]</scope>
    <source>
        <strain>CFT073 / ATCC 700928 / UPEC</strain>
    </source>
</reference>
<proteinExistence type="inferred from homology"/>
<accession>Q8FE31</accession>